<organism>
    <name type="scientific">Homo sapiens</name>
    <name type="common">Human</name>
    <dbReference type="NCBI Taxonomy" id="9606"/>
    <lineage>
        <taxon>Eukaryota</taxon>
        <taxon>Metazoa</taxon>
        <taxon>Chordata</taxon>
        <taxon>Craniata</taxon>
        <taxon>Vertebrata</taxon>
        <taxon>Euteleostomi</taxon>
        <taxon>Mammalia</taxon>
        <taxon>Eutheria</taxon>
        <taxon>Euarchontoglires</taxon>
        <taxon>Primates</taxon>
        <taxon>Haplorrhini</taxon>
        <taxon>Catarrhini</taxon>
        <taxon>Hominidae</taxon>
        <taxon>Homo</taxon>
    </lineage>
</organism>
<reference key="1">
    <citation type="journal article" date="2000" name="Science">
        <title>Accumulation of dietary cholesterol in sitosterolemia caused by mutations in adjacent ABC transporters.</title>
        <authorList>
            <person name="Berge K.E."/>
            <person name="Tian H."/>
            <person name="Graf G.A."/>
            <person name="Yu L."/>
            <person name="Grishin N.V."/>
            <person name="Schultz J."/>
            <person name="Kwiterovich P."/>
            <person name="Shan B."/>
            <person name="Barnes R."/>
            <person name="Hobbs H.H."/>
        </authorList>
    </citation>
    <scope>NUCLEOTIDE SEQUENCE [MRNA] (ISOFORM 1)</scope>
    <scope>FUNCTION</scope>
    <scope>VARIANTS STSL1 THR-231; GLN-263; ARG-574 AND ARG-596</scope>
    <scope>VARIANT CYS-54</scope>
</reference>
<reference key="2">
    <citation type="journal article" date="2001" name="Am. J. Hum. Genet.">
        <title>Two genes that map to the STSL locus cause sitosterolemia: genomic structure and spectrum of mutations involving sterolin-1 and sterolin-2, encoded by ABCG5 and ABCG8, respectively.</title>
        <authorList>
            <person name="Lu K."/>
            <person name="Lee M.-H."/>
            <person name="Hazard S."/>
            <person name="Brooks-Wilson A."/>
            <person name="Hidaka H."/>
            <person name="Kojima H."/>
            <person name="Ose L."/>
            <person name="Stalenhoef A.F.H."/>
            <person name="Mietinnen T."/>
            <person name="Bjorkhem I."/>
            <person name="Bruckert E."/>
            <person name="Pandya A."/>
            <person name="Brewer H.B. Jr."/>
            <person name="Salen G."/>
            <person name="Dean M."/>
            <person name="Srivastava A.K."/>
            <person name="Patel S.B."/>
        </authorList>
    </citation>
    <scope>NUCLEOTIDE SEQUENCE [GENOMIC DNA / MRNA] (ISOFORMS 1 AND 2)</scope>
    <scope>FUNCTION</scope>
    <scope>TISSUE SPECIFICITY</scope>
    <scope>VARIANTS STSL1 HIS-184; THR-231; LYS-238; GLN-263; HIS-405; PRO-501; SER-543; PHE-570 DEL; PRO-572; ARG-574; GLU-574 AND ARG-596</scope>
    <scope>VARIANTS HIS-19; CYS-54; VAL-259; LYS-400; ARG-575 AND ALA-632</scope>
    <source>
        <tissue>Liver</tissue>
    </source>
</reference>
<reference key="3">
    <citation type="journal article" date="2005" name="Nature">
        <title>Generation and annotation of the DNA sequences of human chromosomes 2 and 4.</title>
        <authorList>
            <person name="Hillier L.W."/>
            <person name="Graves T.A."/>
            <person name="Fulton R.S."/>
            <person name="Fulton L.A."/>
            <person name="Pepin K.H."/>
            <person name="Minx P."/>
            <person name="Wagner-McPherson C."/>
            <person name="Layman D."/>
            <person name="Wylie K."/>
            <person name="Sekhon M."/>
            <person name="Becker M.C."/>
            <person name="Fewell G.A."/>
            <person name="Delehaunty K.D."/>
            <person name="Miner T.L."/>
            <person name="Nash W.E."/>
            <person name="Kremitzki C."/>
            <person name="Oddy L."/>
            <person name="Du H."/>
            <person name="Sun H."/>
            <person name="Bradshaw-Cordum H."/>
            <person name="Ali J."/>
            <person name="Carter J."/>
            <person name="Cordes M."/>
            <person name="Harris A."/>
            <person name="Isak A."/>
            <person name="van Brunt A."/>
            <person name="Nguyen C."/>
            <person name="Du F."/>
            <person name="Courtney L."/>
            <person name="Kalicki J."/>
            <person name="Ozersky P."/>
            <person name="Abbott S."/>
            <person name="Armstrong J."/>
            <person name="Belter E.A."/>
            <person name="Caruso L."/>
            <person name="Cedroni M."/>
            <person name="Cotton M."/>
            <person name="Davidson T."/>
            <person name="Desai A."/>
            <person name="Elliott G."/>
            <person name="Erb T."/>
            <person name="Fronick C."/>
            <person name="Gaige T."/>
            <person name="Haakenson W."/>
            <person name="Haglund K."/>
            <person name="Holmes A."/>
            <person name="Harkins R."/>
            <person name="Kim K."/>
            <person name="Kruchowski S.S."/>
            <person name="Strong C.M."/>
            <person name="Grewal N."/>
            <person name="Goyea E."/>
            <person name="Hou S."/>
            <person name="Levy A."/>
            <person name="Martinka S."/>
            <person name="Mead K."/>
            <person name="McLellan M.D."/>
            <person name="Meyer R."/>
            <person name="Randall-Maher J."/>
            <person name="Tomlinson C."/>
            <person name="Dauphin-Kohlberg S."/>
            <person name="Kozlowicz-Reilly A."/>
            <person name="Shah N."/>
            <person name="Swearengen-Shahid S."/>
            <person name="Snider J."/>
            <person name="Strong J.T."/>
            <person name="Thompson J."/>
            <person name="Yoakum M."/>
            <person name="Leonard S."/>
            <person name="Pearman C."/>
            <person name="Trani L."/>
            <person name="Radionenko M."/>
            <person name="Waligorski J.E."/>
            <person name="Wang C."/>
            <person name="Rock S.M."/>
            <person name="Tin-Wollam A.-M."/>
            <person name="Maupin R."/>
            <person name="Latreille P."/>
            <person name="Wendl M.C."/>
            <person name="Yang S.-P."/>
            <person name="Pohl C."/>
            <person name="Wallis J.W."/>
            <person name="Spieth J."/>
            <person name="Bieri T.A."/>
            <person name="Berkowicz N."/>
            <person name="Nelson J.O."/>
            <person name="Osborne J."/>
            <person name="Ding L."/>
            <person name="Meyer R."/>
            <person name="Sabo A."/>
            <person name="Shotland Y."/>
            <person name="Sinha P."/>
            <person name="Wohldmann P.E."/>
            <person name="Cook L.L."/>
            <person name="Hickenbotham M.T."/>
            <person name="Eldred J."/>
            <person name="Williams D."/>
            <person name="Jones T.A."/>
            <person name="She X."/>
            <person name="Ciccarelli F.D."/>
            <person name="Izaurralde E."/>
            <person name="Taylor J."/>
            <person name="Schmutz J."/>
            <person name="Myers R.M."/>
            <person name="Cox D.R."/>
            <person name="Huang X."/>
            <person name="McPherson J.D."/>
            <person name="Mardis E.R."/>
            <person name="Clifton S.W."/>
            <person name="Warren W.C."/>
            <person name="Chinwalla A.T."/>
            <person name="Eddy S.R."/>
            <person name="Marra M.A."/>
            <person name="Ovcharenko I."/>
            <person name="Furey T.S."/>
            <person name="Miller W."/>
            <person name="Eichler E.E."/>
            <person name="Bork P."/>
            <person name="Suyama M."/>
            <person name="Torrents D."/>
            <person name="Waterston R.H."/>
            <person name="Wilson R.K."/>
        </authorList>
    </citation>
    <scope>NUCLEOTIDE SEQUENCE [LARGE SCALE GENOMIC DNA]</scope>
</reference>
<reference key="4">
    <citation type="journal article" date="2001" name="J. Lipid Res.">
        <title>Role of ABCG1 and other ABCG family members in lipid metabolism.</title>
        <authorList>
            <person name="Schmitz G."/>
            <person name="Langmann T."/>
            <person name="Heimerl S."/>
        </authorList>
    </citation>
    <scope>REVIEW</scope>
</reference>
<reference key="5">
    <citation type="journal article" date="2003" name="J. Biol. Chem.">
        <title>ABCG5 and ABCG8 are obligate heterodimers for protein trafficking and biliary cholesterol excretion.</title>
        <authorList>
            <person name="Graf G.A."/>
            <person name="Yu L."/>
            <person name="Li W.P."/>
            <person name="Gerard R."/>
            <person name="Tuma P.L."/>
            <person name="Cohen J.C."/>
            <person name="Hobbs H.H."/>
        </authorList>
    </citation>
    <scope>SUBCELLULAR LOCATION</scope>
</reference>
<reference key="6">
    <citation type="journal article" date="2006" name="Biochemistry">
        <title>Purification and ATP hydrolysis of the putative cholesterol transporters ABCG5 and ABCG8.</title>
        <authorList>
            <person name="Wang Z."/>
            <person name="Stalcup L.D."/>
            <person name="Harvey B.J."/>
            <person name="Weber J."/>
            <person name="Chloupkova M."/>
            <person name="Dumont M.E."/>
            <person name="Dean M."/>
            <person name="Urbatsch I.L."/>
        </authorList>
    </citation>
    <scope>FUNCTION</scope>
    <scope>SUBCELLULAR LOCATION</scope>
    <scope>SUBUNIT</scope>
    <scope>GLYCOSYLATION</scope>
</reference>
<reference key="7">
    <citation type="journal article" date="2010" name="Biochemistry">
        <title>Bile acids stimulate ATP hydrolysis in the purified cholesterol transporter ABCG5/G8.</title>
        <authorList>
            <person name="Johnson B.J."/>
            <person name="Lee J.Y."/>
            <person name="Pickert A."/>
            <person name="Urbatsch I.L."/>
        </authorList>
    </citation>
    <scope>FUNCTION</scope>
    <scope>ACTIVITY REGULATION</scope>
    <scope>SUBUNIT</scope>
    <scope>GLYCOSYLATION</scope>
</reference>
<reference key="8">
    <citation type="journal article" date="2014" name="J. Proteomics">
        <title>An enzyme assisted RP-RPLC approach for in-depth analysis of human liver phosphoproteome.</title>
        <authorList>
            <person name="Bian Y."/>
            <person name="Song C."/>
            <person name="Cheng K."/>
            <person name="Dong M."/>
            <person name="Wang F."/>
            <person name="Huang J."/>
            <person name="Sun D."/>
            <person name="Wang L."/>
            <person name="Ye M."/>
            <person name="Zou H."/>
        </authorList>
    </citation>
    <scope>IDENTIFICATION BY MASS SPECTROMETRY [LARGE SCALE ANALYSIS]</scope>
    <source>
        <tissue>Liver</tissue>
    </source>
</reference>
<reference evidence="19" key="9">
    <citation type="journal article" date="2016" name="Nature">
        <title>Crystal structure of the human sterol transporter ABCG5/ABCG8.</title>
        <authorList>
            <person name="Lee J.Y."/>
            <person name="Kinch L.N."/>
            <person name="Borek D.M."/>
            <person name="Wang J."/>
            <person name="Wang J."/>
            <person name="Urbatsch I.L."/>
            <person name="Xie X.S."/>
            <person name="Grishin N.V."/>
            <person name="Cohen J.C."/>
            <person name="Otwinowski Z."/>
            <person name="Hobbs H.H."/>
            <person name="Rosenbaum D.M."/>
        </authorList>
    </citation>
    <scope>X-RAY CRYSTALLOGRAPHY (3.93 ANGSTROMS) IN COMPLEX WITH ABCG5</scope>
    <scope>FUNCTION</scope>
    <scope>ACTIVITY REGULATION</scope>
    <scope>MUTAGENESIS OF GLY-216</scope>
    <scope>SUBUNIT</scope>
    <scope>TOPOLOGY</scope>
</reference>
<reference key="10">
    <citation type="journal article" date="2001" name="Hum. Mutat.">
        <title>Mutations in ATP-cassette binding proteins G5 (ABCG5) and G8 (ABCG8) causing sitosterolemia.</title>
        <authorList>
            <person name="Hubacek J.A."/>
            <person name="Berge K.E."/>
            <person name="Cohen J.C."/>
            <person name="Hobbs H.H."/>
        </authorList>
    </citation>
    <scope>VARIANTS HIS-19; CYS-54; LYS-400; ALA-632 AND PHE-641</scope>
</reference>
<reference key="11">
    <citation type="journal article" date="2002" name="J. Hum. Genet.">
        <title>Catalog of 605 single-nucleotide polymorphisms (SNPs) among 13 genes encoding human ATP-binding cassette transporters: ABCA4, ABCA7, ABCA8, ABCD1, ABCD3, ABCD4, ABCE1, ABCF1, ABCG1, ABCG2, ABCG4, ABCG5, and ABCG8.</title>
        <authorList>
            <person name="Iida A."/>
            <person name="Saito S."/>
            <person name="Sekine A."/>
            <person name="Mishima C."/>
            <person name="Kitamura Y."/>
            <person name="Kondo K."/>
            <person name="Harigae S."/>
            <person name="Osawa S."/>
            <person name="Nakamura Y."/>
        </authorList>
    </citation>
    <scope>VARIANTS CYS-54 AND LYS-400</scope>
</reference>
<reference key="12">
    <citation type="journal article" date="2004" name="J. Biol. Chem.">
        <title>Missense mutations in ABCG5 and ABCG8 disrupt heterodimerization and trafficking.</title>
        <authorList>
            <person name="Graf G.A."/>
            <person name="Cohen J.C."/>
            <person name="Hobbs H.H."/>
        </authorList>
    </citation>
    <scope>CHARACTERIZATION OF VARIANTS STSL1 HIS-184; THR-231; GLN-263; PRO-501; SER-543; GLU-574 AND ARG-596</scope>
    <scope>FUNCTION</scope>
</reference>
<reference key="13">
    <citation type="journal article" date="2007" name="Nat. Genet.">
        <title>A genome-wide association scan identifies the hepatic cholesterol transporter ABCG8 as a susceptibility factor for human gallstone disease.</title>
        <authorList>
            <person name="Buch S."/>
            <person name="Schafmayer C."/>
            <person name="Voelzke H."/>
            <person name="Becker C."/>
            <person name="Franke A."/>
            <person name="von Eller-Eberstein H."/>
            <person name="Kluck C."/>
            <person name="Baessmann I."/>
            <person name="Brosch M."/>
            <person name="Lammert F."/>
            <person name="Miquel J.F."/>
            <person name="Nervi F."/>
            <person name="Wittig M."/>
            <person name="Rosskopf D."/>
            <person name="Timm B."/>
            <person name="Hoell C."/>
            <person name="Seeger M."/>
            <person name="ElSharawy A."/>
            <person name="Lu T."/>
            <person name="Egberts J."/>
            <person name="Faendrich F."/>
            <person name="Foelsch U.R."/>
            <person name="Krawczak M."/>
            <person name="Schreiber S."/>
            <person name="Nuernberg P."/>
            <person name="Tepel J."/>
            <person name="Hampe J."/>
        </authorList>
    </citation>
    <scope>VARIANT HIS-19</scope>
    <scope>INVOLVEMENT IN GBD4</scope>
</reference>
<accession>Q9H221</accession>
<accession>Q53QN8</accession>
<gene>
    <name evidence="18" type="primary">ABCG8</name>
</gene>
<keyword id="KW-0002">3D-structure</keyword>
<keyword id="KW-0025">Alternative splicing</keyword>
<keyword id="KW-1003">Cell membrane</keyword>
<keyword id="KW-0225">Disease variant</keyword>
<keyword id="KW-0325">Glycoprotein</keyword>
<keyword id="KW-0445">Lipid transport</keyword>
<keyword id="KW-0460">Magnesium</keyword>
<keyword id="KW-0472">Membrane</keyword>
<keyword id="KW-0479">Metal-binding</keyword>
<keyword id="KW-1267">Proteomics identification</keyword>
<keyword id="KW-1185">Reference proteome</keyword>
<keyword id="KW-1278">Translocase</keyword>
<keyword id="KW-0812">Transmembrane</keyword>
<keyword id="KW-1133">Transmembrane helix</keyword>
<keyword id="KW-0813">Transport</keyword>
<feature type="chain" id="PRO_0000093396" description="ATP-binding cassette sub-family G member 8">
    <location>
        <begin position="1"/>
        <end position="673"/>
    </location>
</feature>
<feature type="topological domain" description="Cytoplasmic" evidence="14">
    <location>
        <begin position="1"/>
        <end position="416"/>
    </location>
</feature>
<feature type="transmembrane region" description="Helical; Name=1" evidence="14">
    <location>
        <begin position="417"/>
        <end position="437"/>
    </location>
</feature>
<feature type="topological domain" description="Extracellular" evidence="14">
    <location>
        <begin position="438"/>
        <end position="447"/>
    </location>
</feature>
<feature type="transmembrane region" description="Helical; Name=2" evidence="14">
    <location>
        <begin position="448"/>
        <end position="468"/>
    </location>
</feature>
<feature type="topological domain" description="Cytoplasmic" evidence="14">
    <location>
        <begin position="469"/>
        <end position="497"/>
    </location>
</feature>
<feature type="transmembrane region" description="Helical; Name=3" evidence="14">
    <location>
        <begin position="498"/>
        <end position="518"/>
    </location>
</feature>
<feature type="topological domain" description="Extracellular" evidence="14">
    <location>
        <begin position="519"/>
        <end position="527"/>
    </location>
</feature>
<feature type="transmembrane region" description="Helical; Name=4" evidence="14">
    <location>
        <begin position="528"/>
        <end position="548"/>
    </location>
</feature>
<feature type="topological domain" description="Cytoplasmic" evidence="14">
    <location>
        <begin position="549"/>
        <end position="555"/>
    </location>
</feature>
<feature type="transmembrane region" description="Helical; Name=5" evidence="14">
    <location>
        <begin position="556"/>
        <end position="576"/>
    </location>
</feature>
<feature type="topological domain" description="Extracellular" evidence="14">
    <location>
        <begin position="577"/>
        <end position="639"/>
    </location>
</feature>
<feature type="transmembrane region" description="Helical; Name=6" evidence="14">
    <location>
        <begin position="640"/>
        <end position="660"/>
    </location>
</feature>
<feature type="topological domain" description="Cytoplasmic" evidence="14">
    <location>
        <begin position="661"/>
        <end position="673"/>
    </location>
</feature>
<feature type="domain" description="ABC transporter" evidence="3">
    <location>
        <begin position="47"/>
        <end position="313"/>
    </location>
</feature>
<feature type="domain" description="ABC transmembrane type-2">
    <location>
        <begin position="411"/>
        <end position="665"/>
    </location>
</feature>
<feature type="region of interest" description="Disordered" evidence="4">
    <location>
        <begin position="1"/>
        <end position="25"/>
    </location>
</feature>
<feature type="compositionally biased region" description="Basic and acidic residues" evidence="4">
    <location>
        <begin position="1"/>
        <end position="11"/>
    </location>
</feature>
<feature type="glycosylation site" description="N-linked (GlcNAc...) asparagine" evidence="2">
    <location>
        <position position="619"/>
    </location>
</feature>
<feature type="splice variant" id="VSP_000052" description="In isoform 2." evidence="15">
    <location>
        <position position="376"/>
    </location>
</feature>
<feature type="sequence variant" id="VAR_012250" description="Associated significantly with GBD4; dbSNP:rs11887534." evidence="6 7 12">
    <original>D</original>
    <variation>H</variation>
    <location>
        <position position="19"/>
    </location>
</feature>
<feature type="sequence variant" id="VAR_012251" description="In dbSNP:rs4148211." evidence="5 6 7 8">
    <original>Y</original>
    <variation>C</variation>
    <location>
        <position position="54"/>
    </location>
</feature>
<feature type="sequence variant" id="VAR_012252" description="In STSL1; strongly decreased maturation of glycan chains; dbSNP:rs766212636." evidence="6 10">
    <original>R</original>
    <variation>H</variation>
    <location>
        <position position="184"/>
    </location>
</feature>
<feature type="sequence variant" id="VAR_022074" description="In dbSNP:rs9282574.">
    <original>V</original>
    <variation>M</variation>
    <location>
        <position position="210"/>
    </location>
</feature>
<feature type="sequence variant" id="VAR_012253" description="In STSL1; strongly decreased maturation of glycan chains; dbSNP:rs137852993." evidence="5 6 10">
    <original>P</original>
    <variation>T</variation>
    <location>
        <position position="231"/>
    </location>
</feature>
<feature type="sequence variant" id="VAR_012254" description="In STSL1; uncertain significance; dbSNP:rs34754243." evidence="6">
    <original>E</original>
    <variation>K</variation>
    <location>
        <position position="238"/>
    </location>
</feature>
<feature type="sequence variant" id="VAR_012255" description="In dbSNP:rs35518570." evidence="6">
    <original>A</original>
    <variation>V</variation>
    <location>
        <position position="259"/>
    </location>
</feature>
<feature type="sequence variant" id="VAR_012256" description="In STSL1; strongly decreased maturation of glycan chains; dbSNP:rs137852990." evidence="5 6 10">
    <original>R</original>
    <variation>Q</variation>
    <location>
        <position position="263"/>
    </location>
</feature>
<feature type="sequence variant" id="VAR_012257" description="In dbSNP:rs4148217." evidence="6 7 8">
    <original>T</original>
    <variation>K</variation>
    <location>
        <position position="400"/>
    </location>
</feature>
<feature type="sequence variant" id="VAR_012258" description="In STSL1; dbSNP:rs1177309800." evidence="6">
    <original>R</original>
    <variation>H</variation>
    <location>
        <position position="405"/>
    </location>
</feature>
<feature type="sequence variant" id="VAR_012259" description="In STSL1; strongly decreased maturation of glycan chains; dbSNP:rs1233989408." evidence="6 10">
    <original>L</original>
    <variation>P</variation>
    <location>
        <position position="501"/>
    </location>
</feature>
<feature type="sequence variant" id="VAR_012260" description="In STSL1; decreased maturation of glycan chains; dbSNP:rs201690654." evidence="6 10">
    <original>R</original>
    <variation>S</variation>
    <location>
        <position position="543"/>
    </location>
</feature>
<feature type="sequence variant" id="VAR_012261" description="In STSL1." evidence="6">
    <location>
        <position position="570"/>
    </location>
</feature>
<feature type="sequence variant" id="VAR_012262" description="In STSL1; dbSNP:rs769576789." evidence="6">
    <original>L</original>
    <variation>P</variation>
    <location>
        <position position="572"/>
    </location>
</feature>
<feature type="sequence variant" id="VAR_012263" description="In STSL1; strongly decreased maturation of glycan chains; dbSNP:rs1325979386." evidence="6 10">
    <original>G</original>
    <variation>E</variation>
    <location>
        <position position="574"/>
    </location>
</feature>
<feature type="sequence variant" id="VAR_012264" description="In STSL1; decreased maturation of glycan chains; dbSNP:rs137852988." evidence="5 6 10">
    <original>G</original>
    <variation>R</variation>
    <location>
        <position position="574"/>
    </location>
</feature>
<feature type="sequence variant" id="VAR_012265" evidence="6">
    <original>G</original>
    <variation>R</variation>
    <location>
        <position position="575"/>
    </location>
</feature>
<feature type="sequence variant" id="VAR_012266" description="In STSL1; strongly decreased maturation of glycan chains; dbSNP:rs137852992." evidence="5 6 10">
    <original>L</original>
    <variation>R</variation>
    <location>
        <position position="596"/>
    </location>
</feature>
<feature type="sequence variant" id="VAR_012267" description="In dbSNP:rs6544718." evidence="6 7">
    <original>V</original>
    <variation>A</variation>
    <location>
        <position position="632"/>
    </location>
</feature>
<feature type="sequence variant" id="VAR_020785" description="In dbSNP:rs145125968." evidence="7">
    <original>Y</original>
    <variation>F</variation>
    <location>
        <position position="641"/>
    </location>
</feature>
<feature type="sequence variant" id="VAR_022075" description="In dbSNP:rs9282573.">
    <original>M</original>
    <variation>V</variation>
    <location>
        <position position="655"/>
    </location>
</feature>
<feature type="mutagenesis site" description="Loss of ATPase activity." evidence="14">
    <original>G</original>
    <variation>D</variation>
    <location>
        <position position="216"/>
    </location>
</feature>
<feature type="strand" evidence="22">
    <location>
        <begin position="46"/>
        <end position="55"/>
    </location>
</feature>
<feature type="strand" evidence="22">
    <location>
        <begin position="88"/>
        <end position="96"/>
    </location>
</feature>
<feature type="strand" evidence="22">
    <location>
        <begin position="100"/>
        <end position="106"/>
    </location>
</feature>
<feature type="strand" evidence="22">
    <location>
        <begin position="110"/>
        <end position="112"/>
    </location>
</feature>
<feature type="helix" evidence="22">
    <location>
        <begin position="114"/>
        <end position="119"/>
    </location>
</feature>
<feature type="strand" evidence="22">
    <location>
        <begin position="130"/>
        <end position="134"/>
    </location>
</feature>
<feature type="helix" evidence="22">
    <location>
        <begin position="141"/>
        <end position="147"/>
    </location>
</feature>
<feature type="strand" evidence="22">
    <location>
        <begin position="148"/>
        <end position="151"/>
    </location>
</feature>
<feature type="helix" evidence="22">
    <location>
        <begin position="163"/>
        <end position="174"/>
    </location>
</feature>
<feature type="helix" evidence="22">
    <location>
        <begin position="181"/>
        <end position="194"/>
    </location>
</feature>
<feature type="helix" evidence="23">
    <location>
        <begin position="198"/>
        <end position="200"/>
    </location>
</feature>
<feature type="strand" evidence="21">
    <location>
        <begin position="201"/>
        <end position="204"/>
    </location>
</feature>
<feature type="strand" evidence="20">
    <location>
        <begin position="211"/>
        <end position="213"/>
    </location>
</feature>
<feature type="helix" evidence="22">
    <location>
        <begin position="215"/>
        <end position="227"/>
    </location>
</feature>
<feature type="strand" evidence="22">
    <location>
        <begin position="232"/>
        <end position="238"/>
    </location>
</feature>
<feature type="turn" evidence="22">
    <location>
        <begin position="239"/>
        <end position="242"/>
    </location>
</feature>
<feature type="helix" evidence="22">
    <location>
        <begin position="245"/>
        <end position="259"/>
    </location>
</feature>
<feature type="strand" evidence="22">
    <location>
        <begin position="264"/>
        <end position="268"/>
    </location>
</feature>
<feature type="strand" evidence="22">
    <location>
        <begin position="274"/>
        <end position="276"/>
    </location>
</feature>
<feature type="helix" evidence="22">
    <location>
        <begin position="277"/>
        <end position="279"/>
    </location>
</feature>
<feature type="strand" evidence="22">
    <location>
        <begin position="281"/>
        <end position="287"/>
    </location>
</feature>
<feature type="strand" evidence="22">
    <location>
        <begin position="290"/>
        <end position="297"/>
    </location>
</feature>
<feature type="helix" evidence="22">
    <location>
        <begin position="300"/>
        <end position="305"/>
    </location>
</feature>
<feature type="turn" evidence="22">
    <location>
        <begin position="306"/>
        <end position="308"/>
    </location>
</feature>
<feature type="strand" evidence="23">
    <location>
        <begin position="313"/>
        <end position="315"/>
    </location>
</feature>
<feature type="helix" evidence="22">
    <location>
        <begin position="317"/>
        <end position="323"/>
    </location>
</feature>
<feature type="helix" evidence="23">
    <location>
        <begin position="333"/>
        <end position="352"/>
    </location>
</feature>
<feature type="turn" evidence="20">
    <location>
        <begin position="353"/>
        <end position="355"/>
    </location>
</feature>
<feature type="helix" evidence="20">
    <location>
        <begin position="357"/>
        <end position="359"/>
    </location>
</feature>
<feature type="helix" evidence="22">
    <location>
        <begin position="395"/>
        <end position="410"/>
    </location>
</feature>
<feature type="helix" evidence="22">
    <location>
        <begin position="414"/>
        <end position="434"/>
    </location>
</feature>
<feature type="strand" evidence="22">
    <location>
        <begin position="438"/>
        <end position="441"/>
    </location>
</feature>
<feature type="helix" evidence="22">
    <location>
        <begin position="445"/>
        <end position="458"/>
    </location>
</feature>
<feature type="helix" evidence="22">
    <location>
        <begin position="460"/>
        <end position="472"/>
    </location>
</feature>
<feature type="helix" evidence="22">
    <location>
        <begin position="475"/>
        <end position="484"/>
    </location>
</feature>
<feature type="helix" evidence="22">
    <location>
        <begin position="491"/>
        <end position="516"/>
    </location>
</feature>
<feature type="turn" evidence="22">
    <location>
        <begin position="517"/>
        <end position="520"/>
    </location>
</feature>
<feature type="helix" evidence="22">
    <location>
        <begin position="526"/>
        <end position="552"/>
    </location>
</feature>
<feature type="strand" evidence="23">
    <location>
        <begin position="553"/>
        <end position="555"/>
    </location>
</feature>
<feature type="helix" evidence="22">
    <location>
        <begin position="556"/>
        <end position="572"/>
    </location>
</feature>
<feature type="turn" evidence="22">
    <location>
        <begin position="575"/>
        <end position="577"/>
    </location>
</feature>
<feature type="turn" evidence="22">
    <location>
        <begin position="579"/>
        <end position="581"/>
    </location>
</feature>
<feature type="helix" evidence="22">
    <location>
        <begin position="586"/>
        <end position="592"/>
    </location>
</feature>
<feature type="helix" evidence="22">
    <location>
        <begin position="595"/>
        <end position="608"/>
    </location>
</feature>
<feature type="helix" evidence="22">
    <location>
        <begin position="628"/>
        <end position="632"/>
    </location>
</feature>
<feature type="strand" evidence="20">
    <location>
        <begin position="636"/>
        <end position="638"/>
    </location>
</feature>
<feature type="helix" evidence="22">
    <location>
        <begin position="640"/>
        <end position="664"/>
    </location>
</feature>
<name>ABCG8_HUMAN</name>
<dbReference type="EC" id="7.6.2.-" evidence="1"/>
<dbReference type="EMBL" id="AF320294">
    <property type="protein sequence ID" value="AAG40004.1"/>
    <property type="molecule type" value="mRNA"/>
</dbReference>
<dbReference type="EMBL" id="AF324494">
    <property type="protein sequence ID" value="AAK84078.1"/>
    <property type="molecule type" value="mRNA"/>
</dbReference>
<dbReference type="EMBL" id="AF351824">
    <property type="protein sequence ID" value="AAK84663.1"/>
    <property type="molecule type" value="Genomic_DNA"/>
</dbReference>
<dbReference type="EMBL" id="AF351812">
    <property type="protein sequence ID" value="AAK84663.1"/>
    <property type="status" value="JOINED"/>
    <property type="molecule type" value="Genomic_DNA"/>
</dbReference>
<dbReference type="EMBL" id="AF351813">
    <property type="protein sequence ID" value="AAK84663.1"/>
    <property type="status" value="JOINED"/>
    <property type="molecule type" value="Genomic_DNA"/>
</dbReference>
<dbReference type="EMBL" id="AF351814">
    <property type="protein sequence ID" value="AAK84663.1"/>
    <property type="status" value="JOINED"/>
    <property type="molecule type" value="Genomic_DNA"/>
</dbReference>
<dbReference type="EMBL" id="AF351815">
    <property type="protein sequence ID" value="AAK84663.1"/>
    <property type="status" value="JOINED"/>
    <property type="molecule type" value="Genomic_DNA"/>
</dbReference>
<dbReference type="EMBL" id="AF351816">
    <property type="protein sequence ID" value="AAK84663.1"/>
    <property type="status" value="JOINED"/>
    <property type="molecule type" value="Genomic_DNA"/>
</dbReference>
<dbReference type="EMBL" id="AF351817">
    <property type="protein sequence ID" value="AAK84663.1"/>
    <property type="status" value="JOINED"/>
    <property type="molecule type" value="Genomic_DNA"/>
</dbReference>
<dbReference type="EMBL" id="AF351818">
    <property type="protein sequence ID" value="AAK84663.1"/>
    <property type="status" value="JOINED"/>
    <property type="molecule type" value="Genomic_DNA"/>
</dbReference>
<dbReference type="EMBL" id="AF351819">
    <property type="protein sequence ID" value="AAK84663.1"/>
    <property type="status" value="JOINED"/>
    <property type="molecule type" value="Genomic_DNA"/>
</dbReference>
<dbReference type="EMBL" id="AF351820">
    <property type="protein sequence ID" value="AAK84663.1"/>
    <property type="status" value="JOINED"/>
    <property type="molecule type" value="Genomic_DNA"/>
</dbReference>
<dbReference type="EMBL" id="AF351821">
    <property type="protein sequence ID" value="AAK84663.1"/>
    <property type="status" value="JOINED"/>
    <property type="molecule type" value="Genomic_DNA"/>
</dbReference>
<dbReference type="EMBL" id="AF351822">
    <property type="protein sequence ID" value="AAK84663.1"/>
    <property type="status" value="JOINED"/>
    <property type="molecule type" value="Genomic_DNA"/>
</dbReference>
<dbReference type="EMBL" id="AF351823">
    <property type="protein sequence ID" value="AAK84663.1"/>
    <property type="status" value="JOINED"/>
    <property type="molecule type" value="Genomic_DNA"/>
</dbReference>
<dbReference type="EMBL" id="AC108476">
    <property type="protein sequence ID" value="AAY24011.1"/>
    <property type="molecule type" value="Genomic_DNA"/>
</dbReference>
<dbReference type="CCDS" id="CCDS1815.1">
    <molecule id="Q9H221-1"/>
</dbReference>
<dbReference type="RefSeq" id="NP_001344250.1">
    <molecule id="Q9H221-2"/>
    <property type="nucleotide sequence ID" value="NM_001357321.2"/>
</dbReference>
<dbReference type="RefSeq" id="NP_071882.1">
    <molecule id="Q9H221-1"/>
    <property type="nucleotide sequence ID" value="NM_022437.3"/>
</dbReference>
<dbReference type="RefSeq" id="XP_005264540.1">
    <property type="nucleotide sequence ID" value="XM_005264483.3"/>
</dbReference>
<dbReference type="PDB" id="5DO7">
    <property type="method" value="X-ray"/>
    <property type="resolution" value="3.93 A"/>
    <property type="chains" value="B/D=2-673"/>
</dbReference>
<dbReference type="PDB" id="7JR7">
    <property type="method" value="EM"/>
    <property type="resolution" value="3.30 A"/>
    <property type="chains" value="B=1-673"/>
</dbReference>
<dbReference type="PDB" id="7R87">
    <property type="method" value="EM"/>
    <property type="resolution" value="3.40 A"/>
    <property type="chains" value="B=1-673"/>
</dbReference>
<dbReference type="PDB" id="7R88">
    <property type="method" value="EM"/>
    <property type="resolution" value="3.50 A"/>
    <property type="chains" value="B=1-673"/>
</dbReference>
<dbReference type="PDB" id="7R89">
    <property type="method" value="EM"/>
    <property type="resolution" value="2.60 A"/>
    <property type="chains" value="B=1-673"/>
</dbReference>
<dbReference type="PDB" id="7R8A">
    <property type="method" value="EM"/>
    <property type="resolution" value="2.90 A"/>
    <property type="chains" value="B=1-673"/>
</dbReference>
<dbReference type="PDB" id="7R8B">
    <property type="method" value="EM"/>
    <property type="resolution" value="3.10 A"/>
    <property type="chains" value="B=1-673"/>
</dbReference>
<dbReference type="PDB" id="8CUB">
    <property type="method" value="X-ray"/>
    <property type="resolution" value="4.05 A"/>
    <property type="chains" value="B/D=2-673"/>
</dbReference>
<dbReference type="PDBsum" id="5DO7"/>
<dbReference type="PDBsum" id="7JR7"/>
<dbReference type="PDBsum" id="7R87"/>
<dbReference type="PDBsum" id="7R88"/>
<dbReference type="PDBsum" id="7R89"/>
<dbReference type="PDBsum" id="7R8A"/>
<dbReference type="PDBsum" id="7R8B"/>
<dbReference type="PDBsum" id="8CUB"/>
<dbReference type="EMDB" id="EMD-22443"/>
<dbReference type="EMDB" id="EMD-24310"/>
<dbReference type="EMDB" id="EMD-24311"/>
<dbReference type="EMDB" id="EMD-24312"/>
<dbReference type="EMDB" id="EMD-24313"/>
<dbReference type="EMDB" id="EMD-24314"/>
<dbReference type="SMR" id="Q9H221"/>
<dbReference type="BioGRID" id="122125">
    <property type="interactions" value="16"/>
</dbReference>
<dbReference type="CORUM" id="Q9H221"/>
<dbReference type="DIP" id="DIP-42631N"/>
<dbReference type="FunCoup" id="Q9H221">
    <property type="interactions" value="92"/>
</dbReference>
<dbReference type="IntAct" id="Q9H221">
    <property type="interactions" value="14"/>
</dbReference>
<dbReference type="MINT" id="Q9H221"/>
<dbReference type="STRING" id="9606.ENSP00000272286"/>
<dbReference type="DrugBank" id="DB08834">
    <property type="generic name" value="Tauroursodeoxycholic acid"/>
</dbReference>
<dbReference type="DrugBank" id="DB11635">
    <property type="generic name" value="Tocofersolan"/>
</dbReference>
<dbReference type="TCDB" id="3.A.1.204.5">
    <property type="family name" value="the atp-binding cassette (abc) superfamily"/>
</dbReference>
<dbReference type="GlyCosmos" id="Q9H221">
    <property type="glycosylation" value="1 site, No reported glycans"/>
</dbReference>
<dbReference type="GlyGen" id="Q9H221">
    <property type="glycosylation" value="1 site"/>
</dbReference>
<dbReference type="iPTMnet" id="Q9H221"/>
<dbReference type="PhosphoSitePlus" id="Q9H221"/>
<dbReference type="BioMuta" id="ABCG8"/>
<dbReference type="DMDM" id="17432916"/>
<dbReference type="MassIVE" id="Q9H221"/>
<dbReference type="PaxDb" id="9606-ENSP00000272286"/>
<dbReference type="PeptideAtlas" id="Q9H221"/>
<dbReference type="ProteomicsDB" id="80473">
    <molecule id="Q9H221-1"/>
</dbReference>
<dbReference type="ProteomicsDB" id="80474">
    <molecule id="Q9H221-2"/>
</dbReference>
<dbReference type="Antibodypedia" id="14910">
    <property type="antibodies" value="311 antibodies from 26 providers"/>
</dbReference>
<dbReference type="DNASU" id="64241"/>
<dbReference type="Ensembl" id="ENST00000272286.4">
    <molecule id="Q9H221-1"/>
    <property type="protein sequence ID" value="ENSP00000272286.2"/>
    <property type="gene ID" value="ENSG00000143921.9"/>
</dbReference>
<dbReference type="GeneID" id="64241"/>
<dbReference type="KEGG" id="hsa:64241"/>
<dbReference type="MANE-Select" id="ENST00000272286.4">
    <property type="protein sequence ID" value="ENSP00000272286.2"/>
    <property type="RefSeq nucleotide sequence ID" value="NM_022437.3"/>
    <property type="RefSeq protein sequence ID" value="NP_071882.1"/>
</dbReference>
<dbReference type="UCSC" id="uc002rtq.3">
    <molecule id="Q9H221-1"/>
    <property type="organism name" value="human"/>
</dbReference>
<dbReference type="AGR" id="HGNC:13887"/>
<dbReference type="CTD" id="64241"/>
<dbReference type="DisGeNET" id="64241"/>
<dbReference type="GeneCards" id="ABCG8"/>
<dbReference type="GeneReviews" id="ABCG8"/>
<dbReference type="HGNC" id="HGNC:13887">
    <property type="gene designation" value="ABCG8"/>
</dbReference>
<dbReference type="HPA" id="ENSG00000143921">
    <property type="expression patterns" value="Group enriched (intestine, liver)"/>
</dbReference>
<dbReference type="MalaCards" id="ABCG8"/>
<dbReference type="MIM" id="210250">
    <property type="type" value="phenotype"/>
</dbReference>
<dbReference type="MIM" id="605460">
    <property type="type" value="gene"/>
</dbReference>
<dbReference type="MIM" id="611465">
    <property type="type" value="phenotype"/>
</dbReference>
<dbReference type="neXtProt" id="NX_Q9H221"/>
<dbReference type="OpenTargets" id="ENSG00000143921"/>
<dbReference type="Orphanet" id="391665">
    <property type="disease" value="Homozygous familial hypercholesterolemia"/>
</dbReference>
<dbReference type="Orphanet" id="2882">
    <property type="disease" value="Sitosterolemia"/>
</dbReference>
<dbReference type="PharmGKB" id="PA24412"/>
<dbReference type="VEuPathDB" id="HostDB:ENSG00000143921"/>
<dbReference type="eggNOG" id="KOG0061">
    <property type="taxonomic scope" value="Eukaryota"/>
</dbReference>
<dbReference type="GeneTree" id="ENSGT00940000159739"/>
<dbReference type="HOGENOM" id="CLU_000604_57_9_1"/>
<dbReference type="InParanoid" id="Q9H221"/>
<dbReference type="OMA" id="WLAWEDY"/>
<dbReference type="OrthoDB" id="66620at2759"/>
<dbReference type="PAN-GO" id="Q9H221">
    <property type="GO annotations" value="7 GO annotations based on evolutionary models"/>
</dbReference>
<dbReference type="PhylomeDB" id="Q9H221"/>
<dbReference type="TreeFam" id="TF105212"/>
<dbReference type="PathwayCommons" id="Q9H221"/>
<dbReference type="Reactome" id="R-HSA-1369062">
    <property type="pathway name" value="ABC transporters in lipid homeostasis"/>
</dbReference>
<dbReference type="Reactome" id="R-HSA-5679090">
    <property type="pathway name" value="Defective ABCG8 causes GBD4 and sitosterolemia"/>
</dbReference>
<dbReference type="Reactome" id="R-HSA-5679096">
    <property type="pathway name" value="Defective ABCG5 causes sitosterolemia"/>
</dbReference>
<dbReference type="Reactome" id="R-HSA-9029569">
    <property type="pathway name" value="NR1H3 &amp; NR1H2 regulate gene expression linked to cholesterol transport and efflux"/>
</dbReference>
<dbReference type="SignaLink" id="Q9H221"/>
<dbReference type="SIGNOR" id="Q9H221"/>
<dbReference type="BioGRID-ORCS" id="64241">
    <property type="hits" value="14 hits in 1139 CRISPR screens"/>
</dbReference>
<dbReference type="GeneWiki" id="ABCG8"/>
<dbReference type="GenomeRNAi" id="64241"/>
<dbReference type="Pharos" id="Q9H221">
    <property type="development level" value="Tbio"/>
</dbReference>
<dbReference type="PRO" id="PR:Q9H221"/>
<dbReference type="Proteomes" id="UP000005640">
    <property type="component" value="Chromosome 2"/>
</dbReference>
<dbReference type="RNAct" id="Q9H221">
    <property type="molecule type" value="protein"/>
</dbReference>
<dbReference type="Bgee" id="ENSG00000143921">
    <property type="expression patterns" value="Expressed in right lobe of liver and 47 other cell types or tissues"/>
</dbReference>
<dbReference type="ExpressionAtlas" id="Q9H221">
    <property type="expression patterns" value="baseline and differential"/>
</dbReference>
<dbReference type="GO" id="GO:0016324">
    <property type="term" value="C:apical plasma membrane"/>
    <property type="evidence" value="ECO:0000315"/>
    <property type="project" value="BHF-UCL"/>
</dbReference>
<dbReference type="GO" id="GO:0043190">
    <property type="term" value="C:ATP-binding cassette (ABC) transporter complex"/>
    <property type="evidence" value="ECO:0000314"/>
    <property type="project" value="UniProtKB"/>
</dbReference>
<dbReference type="GO" id="GO:0005886">
    <property type="term" value="C:plasma membrane"/>
    <property type="evidence" value="ECO:0000250"/>
    <property type="project" value="UniProtKB"/>
</dbReference>
<dbReference type="GO" id="GO:0043235">
    <property type="term" value="C:receptor complex"/>
    <property type="evidence" value="ECO:0000314"/>
    <property type="project" value="BHF-UCL"/>
</dbReference>
<dbReference type="GO" id="GO:0140359">
    <property type="term" value="F:ABC-type transporter activity"/>
    <property type="evidence" value="ECO:0007669"/>
    <property type="project" value="InterPro"/>
</dbReference>
<dbReference type="GO" id="GO:0005524">
    <property type="term" value="F:ATP binding"/>
    <property type="evidence" value="ECO:0007669"/>
    <property type="project" value="InterPro"/>
</dbReference>
<dbReference type="GO" id="GO:0016887">
    <property type="term" value="F:ATP hydrolysis activity"/>
    <property type="evidence" value="ECO:0007669"/>
    <property type="project" value="InterPro"/>
</dbReference>
<dbReference type="GO" id="GO:0042626">
    <property type="term" value="F:ATPase-coupled transmembrane transporter activity"/>
    <property type="evidence" value="ECO:0000314"/>
    <property type="project" value="UniProtKB"/>
</dbReference>
<dbReference type="GO" id="GO:0120020">
    <property type="term" value="F:cholesterol transfer activity"/>
    <property type="evidence" value="ECO:0007669"/>
    <property type="project" value="Ensembl"/>
</dbReference>
<dbReference type="GO" id="GO:0046872">
    <property type="term" value="F:metal ion binding"/>
    <property type="evidence" value="ECO:0007669"/>
    <property type="project" value="UniProtKB-KW"/>
</dbReference>
<dbReference type="GO" id="GO:0046982">
    <property type="term" value="F:protein heterodimerization activity"/>
    <property type="evidence" value="ECO:0000353"/>
    <property type="project" value="BHF-UCL"/>
</dbReference>
<dbReference type="GO" id="GO:0033344">
    <property type="term" value="P:cholesterol efflux"/>
    <property type="evidence" value="ECO:0000315"/>
    <property type="project" value="UniProtKB"/>
</dbReference>
<dbReference type="GO" id="GO:0042632">
    <property type="term" value="P:cholesterol homeostasis"/>
    <property type="evidence" value="ECO:0000315"/>
    <property type="project" value="UniProtKB"/>
</dbReference>
<dbReference type="GO" id="GO:0030299">
    <property type="term" value="P:intestinal cholesterol absorption"/>
    <property type="evidence" value="ECO:0000305"/>
    <property type="project" value="BHF-UCL"/>
</dbReference>
<dbReference type="GO" id="GO:0045796">
    <property type="term" value="P:negative regulation of intestinal cholesterol absorption"/>
    <property type="evidence" value="ECO:0000315"/>
    <property type="project" value="BHF-UCL"/>
</dbReference>
<dbReference type="GO" id="GO:0010949">
    <property type="term" value="P:negative regulation of intestinal phytosterol absorption"/>
    <property type="evidence" value="ECO:0000315"/>
    <property type="project" value="BHF-UCL"/>
</dbReference>
<dbReference type="GO" id="GO:0015914">
    <property type="term" value="P:phospholipid transport"/>
    <property type="evidence" value="ECO:0007669"/>
    <property type="project" value="Ensembl"/>
</dbReference>
<dbReference type="GO" id="GO:0014850">
    <property type="term" value="P:response to muscle activity"/>
    <property type="evidence" value="ECO:0007669"/>
    <property type="project" value="Ensembl"/>
</dbReference>
<dbReference type="GO" id="GO:0007584">
    <property type="term" value="P:response to nutrient"/>
    <property type="evidence" value="ECO:0007669"/>
    <property type="project" value="Ensembl"/>
</dbReference>
<dbReference type="GO" id="GO:0009410">
    <property type="term" value="P:response to xenobiotic stimulus"/>
    <property type="evidence" value="ECO:0007669"/>
    <property type="project" value="Ensembl"/>
</dbReference>
<dbReference type="GO" id="GO:0015918">
    <property type="term" value="P:sterol transport"/>
    <property type="evidence" value="ECO:0000250"/>
    <property type="project" value="UniProtKB"/>
</dbReference>
<dbReference type="GO" id="GO:0055085">
    <property type="term" value="P:transmembrane transport"/>
    <property type="evidence" value="ECO:0000318"/>
    <property type="project" value="GO_Central"/>
</dbReference>
<dbReference type="GO" id="GO:0070328">
    <property type="term" value="P:triglyceride homeostasis"/>
    <property type="evidence" value="ECO:0007669"/>
    <property type="project" value="Ensembl"/>
</dbReference>
<dbReference type="CDD" id="cd03234">
    <property type="entry name" value="ABCG_White"/>
    <property type="match status" value="1"/>
</dbReference>
<dbReference type="FunFam" id="3.40.50.300:FF:000831">
    <property type="entry name" value="ATP-binding cassette sub-family G member 8"/>
    <property type="match status" value="1"/>
</dbReference>
<dbReference type="Gene3D" id="3.40.50.300">
    <property type="entry name" value="P-loop containing nucleotide triphosphate hydrolases"/>
    <property type="match status" value="1"/>
</dbReference>
<dbReference type="InterPro" id="IPR013525">
    <property type="entry name" value="ABC2_TM"/>
</dbReference>
<dbReference type="InterPro" id="IPR003439">
    <property type="entry name" value="ABC_transporter-like_ATP-bd"/>
</dbReference>
<dbReference type="InterPro" id="IPR017871">
    <property type="entry name" value="ABC_transporter-like_CS"/>
</dbReference>
<dbReference type="InterPro" id="IPR043926">
    <property type="entry name" value="ABCG_dom"/>
</dbReference>
<dbReference type="InterPro" id="IPR050352">
    <property type="entry name" value="ABCG_transporters"/>
</dbReference>
<dbReference type="InterPro" id="IPR027417">
    <property type="entry name" value="P-loop_NTPase"/>
</dbReference>
<dbReference type="PANTHER" id="PTHR48041">
    <property type="entry name" value="ABC TRANSPORTER G FAMILY MEMBER 28"/>
    <property type="match status" value="1"/>
</dbReference>
<dbReference type="PANTHER" id="PTHR48041:SF71">
    <property type="entry name" value="ATP-BINDING CASSETTE SUB-FAMILY G MEMBER 8"/>
    <property type="match status" value="1"/>
</dbReference>
<dbReference type="Pfam" id="PF01061">
    <property type="entry name" value="ABC2_membrane"/>
    <property type="match status" value="1"/>
</dbReference>
<dbReference type="Pfam" id="PF19055">
    <property type="entry name" value="ABC2_membrane_7"/>
    <property type="match status" value="1"/>
</dbReference>
<dbReference type="Pfam" id="PF00005">
    <property type="entry name" value="ABC_tran"/>
    <property type="match status" value="1"/>
</dbReference>
<dbReference type="SUPFAM" id="SSF52540">
    <property type="entry name" value="P-loop containing nucleoside triphosphate hydrolases"/>
    <property type="match status" value="1"/>
</dbReference>
<dbReference type="PROSITE" id="PS00211">
    <property type="entry name" value="ABC_TRANSPORTER_1"/>
    <property type="match status" value="1"/>
</dbReference>
<dbReference type="PROSITE" id="PS50893">
    <property type="entry name" value="ABC_TRANSPORTER_2"/>
    <property type="match status" value="1"/>
</dbReference>
<protein>
    <recommendedName>
        <fullName evidence="16">ATP-binding cassette sub-family G member 8</fullName>
        <ecNumber evidence="1">7.6.2.-</ecNumber>
    </recommendedName>
    <alternativeName>
        <fullName evidence="15">Sterolin-2</fullName>
    </alternativeName>
</protein>
<evidence type="ECO:0000250" key="1">
    <source>
        <dbReference type="UniProtKB" id="Q9DBM0"/>
    </source>
</evidence>
<evidence type="ECO:0000255" key="2"/>
<evidence type="ECO:0000255" key="3">
    <source>
        <dbReference type="PROSITE-ProRule" id="PRU00434"/>
    </source>
</evidence>
<evidence type="ECO:0000256" key="4">
    <source>
        <dbReference type="SAM" id="MobiDB-lite"/>
    </source>
</evidence>
<evidence type="ECO:0000269" key="5">
    <source>
    </source>
</evidence>
<evidence type="ECO:0000269" key="6">
    <source>
    </source>
</evidence>
<evidence type="ECO:0000269" key="7">
    <source>
    </source>
</evidence>
<evidence type="ECO:0000269" key="8">
    <source>
    </source>
</evidence>
<evidence type="ECO:0000269" key="9">
    <source>
    </source>
</evidence>
<evidence type="ECO:0000269" key="10">
    <source>
    </source>
</evidence>
<evidence type="ECO:0000269" key="11">
    <source>
    </source>
</evidence>
<evidence type="ECO:0000269" key="12">
    <source>
    </source>
</evidence>
<evidence type="ECO:0000269" key="13">
    <source>
    </source>
</evidence>
<evidence type="ECO:0000269" key="14">
    <source>
    </source>
</evidence>
<evidence type="ECO:0000303" key="15">
    <source>
    </source>
</evidence>
<evidence type="ECO:0000305" key="16"/>
<evidence type="ECO:0000305" key="17">
    <source>
    </source>
</evidence>
<evidence type="ECO:0000312" key="18">
    <source>
        <dbReference type="HGNC" id="HGNC:13887"/>
    </source>
</evidence>
<evidence type="ECO:0007744" key="19">
    <source>
        <dbReference type="PDB" id="5DO7"/>
    </source>
</evidence>
<evidence type="ECO:0007829" key="20">
    <source>
        <dbReference type="PDB" id="7JR7"/>
    </source>
</evidence>
<evidence type="ECO:0007829" key="21">
    <source>
        <dbReference type="PDB" id="7R87"/>
    </source>
</evidence>
<evidence type="ECO:0007829" key="22">
    <source>
        <dbReference type="PDB" id="7R89"/>
    </source>
</evidence>
<evidence type="ECO:0007829" key="23">
    <source>
        <dbReference type="PDB" id="7R8B"/>
    </source>
</evidence>
<comment type="function">
    <text evidence="5 6 10 11 14">ABCG5 and ABCG8 form an obligate heterodimer that mediates Mg(2+)- and ATP-dependent sterol transport across the cell membrane. Plays an essential role in the selective transport of the dietary cholesterol in and out of the enterocytes and in the selective sterol excretion by the liver into bile (PubMed:11099417, PubMed:11452359, PubMed:15054092, PubMed:27144356). Required for normal sterol homeostasis (PubMed:11099417, PubMed:11452359, PubMed:15054092). The heterodimer with ABCG5 has ATPase activity (PubMed:16893193, PubMed:20210363, PubMed:27144356).</text>
</comment>
<comment type="catalytic activity">
    <reaction evidence="1">
        <text>cholesterol(in) + ATP + H2O = cholesterol(out) + ADP + phosphate + H(+)</text>
        <dbReference type="Rhea" id="RHEA:39051"/>
        <dbReference type="ChEBI" id="CHEBI:15377"/>
        <dbReference type="ChEBI" id="CHEBI:15378"/>
        <dbReference type="ChEBI" id="CHEBI:16113"/>
        <dbReference type="ChEBI" id="CHEBI:30616"/>
        <dbReference type="ChEBI" id="CHEBI:43474"/>
        <dbReference type="ChEBI" id="CHEBI:456216"/>
    </reaction>
    <physiologicalReaction direction="left-to-right" evidence="1">
        <dbReference type="Rhea" id="RHEA:39052"/>
    </physiologicalReaction>
</comment>
<comment type="catalytic activity">
    <reaction evidence="1">
        <text>sitosterol(in) + ATP + H2O = sitosterol(out) + ADP + phosphate + H(+)</text>
        <dbReference type="Rhea" id="RHEA:39103"/>
        <dbReference type="ChEBI" id="CHEBI:15377"/>
        <dbReference type="ChEBI" id="CHEBI:15378"/>
        <dbReference type="ChEBI" id="CHEBI:27693"/>
        <dbReference type="ChEBI" id="CHEBI:30616"/>
        <dbReference type="ChEBI" id="CHEBI:43474"/>
        <dbReference type="ChEBI" id="CHEBI:456216"/>
    </reaction>
    <physiologicalReaction direction="left-to-right" evidence="1">
        <dbReference type="Rhea" id="RHEA:39104"/>
    </physiologicalReaction>
</comment>
<comment type="cofactor">
    <cofactor evidence="1">
        <name>Mg(2+)</name>
        <dbReference type="ChEBI" id="CHEBI:18420"/>
    </cofactor>
</comment>
<comment type="activity regulation">
    <text evidence="13 14">The ATPase activity of the heterodimer is stimulated by cholate. Taurocholate, glycocholate, taurochenodeoxycholate, glycochenodeoxycholate and taurodeoxycholate also stimulate ATPase activity, but to a lower degree. Glycodeoxycholate has no significant effect on ATPase activity. ATPase activity is inhibited by vanadate and by berillium fluoride.</text>
</comment>
<comment type="subunit">
    <text evidence="11 13 14">Heterodimer with ABCG8.</text>
</comment>
<comment type="interaction">
    <interactant intactId="EBI-3908684">
        <id>Q9H221</id>
    </interactant>
    <interactant intactId="EBI-1761423">
        <id>Q9H222</id>
        <label>ABCG5</label>
    </interactant>
    <organismsDiffer>false</organismsDiffer>
    <experiments>2</experiments>
</comment>
<comment type="interaction">
    <interactant intactId="EBI-3908684">
        <id>Q9H221</id>
    </interactant>
    <interactant intactId="EBI-6165891">
        <id>Q14696</id>
        <label>MESD</label>
    </interactant>
    <organismsDiffer>false</organismsDiffer>
    <experiments>3</experiments>
</comment>
<comment type="interaction">
    <interactant intactId="EBI-16205990">
        <id>Q9H221-1</id>
    </interactant>
    <interactant intactId="EBI-16205983">
        <id>Q9H222-1</id>
        <label>ABCG5</label>
    </interactant>
    <organismsDiffer>false</organismsDiffer>
    <experiments>5</experiments>
</comment>
<comment type="subcellular location">
    <subcellularLocation>
        <location evidence="17">Cell membrane</location>
        <topology evidence="14">Multi-pass membrane protein</topology>
    </subcellularLocation>
    <subcellularLocation>
        <location evidence="9">Apical cell membrane</location>
        <topology evidence="14">Multi-pass membrane protein</topology>
    </subcellularLocation>
</comment>
<comment type="alternative products">
    <event type="alternative splicing"/>
    <isoform>
        <id>Q9H221-1</id>
        <name>1</name>
        <sequence type="displayed"/>
    </isoform>
    <isoform>
        <id>Q9H221-2</id>
        <name>2</name>
        <sequence type="described" ref="VSP_000052"/>
    </isoform>
</comment>
<comment type="tissue specificity">
    <text evidence="5 6">Predominantly expressed in the liver (PubMed:11099417, PubMed:11452359). Low expression levels in the small intestine and colon (PubMed:11099417). Very low levels in other tissues, including brain, heart and spleen (PubMed:11452359).</text>
</comment>
<comment type="domain">
    <text evidence="1">A functional Walker motif (consensus sequence G-X-X-G-X-G-K-[ST]-T) is expected to bind ATP. The essential Lys in this region is not conserved in ABCG8 (G-S-S-G-C-R-A-S) and is not required for transport activity mediated by the heterodimer with ABCG5.</text>
</comment>
<comment type="PTM">
    <text evidence="11 13">N-glycosylated.</text>
</comment>
<comment type="disease" evidence="12">
    <disease id="DI-02886">
        <name>Gallbladder disease 4</name>
        <acronym>GBD4</acronym>
        <description>One of the major digestive diseases. Gallstones composed of cholesterol (cholelithiasis) are the common manifestations in western countries. Most people with gallstones, however, remain asymptomatic through their lifetimes.</description>
        <dbReference type="MIM" id="611465"/>
    </disease>
    <text>Disease susceptibility may be associated with variants affecting the gene represented in this entry.</text>
</comment>
<comment type="disease" evidence="5 6 10">
    <disease id="DI-02308">
        <name>Sitosterolemia 1</name>
        <acronym>STSL1</acronym>
        <description>A form of sitosterolemia, an autosomal recessive metabolic disorder characterized by unregulated intestinal absorption of cholesterol, phytosterols and shellfish sterols, and decreased biliary excretion of dietary sterols into bile. Patients have hypercholesterolemia, very high levels of plant sterols in the plasma, and frequently develop tendon and tuberous xanthomas, accelerated atherosclerosis and premature coronary artery disease.</description>
        <dbReference type="MIM" id="210250"/>
    </disease>
    <text>The disease is caused by variants affecting the gene represented in this entry.</text>
</comment>
<comment type="miscellaneous">
    <molecule>Isoform 2</molecule>
    <text evidence="16">Minor form detected in approximately 10% of the cDNA clones.</text>
</comment>
<comment type="similarity">
    <text evidence="16">Belongs to the ABC transporter superfamily. ABCG family. Eye pigment precursor importer (TC 3.A.1.204) subfamily.</text>
</comment>
<comment type="caution">
    <text evidence="16">Seems to have a defective ATP-binding region.</text>
</comment>
<comment type="online information" name="ABCMdb">
    <link uri="http://abcm2.hegelab.org/search"/>
    <text>Database for mutations in ABC proteins</text>
</comment>
<proteinExistence type="evidence at protein level"/>
<sequence>MAGKAAEERGLPKGATPQDTSGLQDRLFSSESDNSLYFTYSGQPNTLEVRDLNYQVDLASQVPWFEQLAQFKMPWTSPSCQNSCELGIQNLSFKVRSGQMLAIIGSSGCGRASLLDVITGRGHGGKIKSGQIWINGQPSSPQLVRKCVAHVRQHNQLLPNLTVRETLAFIAQMRLPRTFSQAQRDKRVEDVIAELRLRQCADTRVGNMYVRGLSGGERRRVSIGVQLLWNPGILILDEPTSGLDSFTAHNLVKTLSRLAKGNRLVLISLHQPRSDIFRLFDLVLLMTSGTPIYLGAAQHMVQYFTAIGYPCPRYSNPADFYVDLTSIDRRSREQELATREKAQSLAALFLEKVRDLDDFLWKAETKDLDEDTCVESSVTPLDTNCLPSPTKMPGAVQQFTTLIRRQISNDFRDLPTLLIHGAEACLMSMTIGFLYFGHGSIQLSFMDTAALLFMIGALIPFNVILDVISKCYSERAMLYYELEDGLYTTGPYFFAKILGELPEHCAYIIIYGMPTYWLANLRPGLQPFLLHFLLVWLVVFCCRIMALAAAALLPTFHMASFFSNALYNSFYLAGGFMINLSSLWTVPAWISKVSFLRWCFEGLMKIQFSRRTYKMPLGNLTIAVSGDKILSVMELDSYPLYAIYLIVIGLSGGFMVLYYVSLRFIKQKPSQDW</sequence>